<reference key="1">
    <citation type="submission" date="2007-05" db="EMBL/GenBank/DDBJ databases">
        <title>Complete sequence of chromosome of Acidiphilium cryptum JF-5.</title>
        <authorList>
            <consortium name="US DOE Joint Genome Institute"/>
            <person name="Copeland A."/>
            <person name="Lucas S."/>
            <person name="Lapidus A."/>
            <person name="Barry K."/>
            <person name="Detter J.C."/>
            <person name="Glavina del Rio T."/>
            <person name="Hammon N."/>
            <person name="Israni S."/>
            <person name="Dalin E."/>
            <person name="Tice H."/>
            <person name="Pitluck S."/>
            <person name="Sims D."/>
            <person name="Brettin T."/>
            <person name="Bruce D."/>
            <person name="Han C."/>
            <person name="Schmutz J."/>
            <person name="Larimer F."/>
            <person name="Land M."/>
            <person name="Hauser L."/>
            <person name="Kyrpides N."/>
            <person name="Kim E."/>
            <person name="Magnuson T."/>
            <person name="Richardson P."/>
        </authorList>
    </citation>
    <scope>NUCLEOTIDE SEQUENCE [LARGE SCALE GENOMIC DNA]</scope>
    <source>
        <strain>JF-5</strain>
    </source>
</reference>
<evidence type="ECO:0000255" key="1">
    <source>
        <dbReference type="HAMAP-Rule" id="MF_01359"/>
    </source>
</evidence>
<protein>
    <recommendedName>
        <fullName evidence="1">NADH-quinone oxidoreductase subunit C/D</fullName>
        <ecNumber evidence="1">7.1.1.-</ecNumber>
    </recommendedName>
    <alternativeName>
        <fullName evidence="1">NADH dehydrogenase I subunit C/D</fullName>
    </alternativeName>
    <alternativeName>
        <fullName evidence="1">NDH-1 subunit C/D</fullName>
    </alternativeName>
</protein>
<dbReference type="EC" id="7.1.1.-" evidence="1"/>
<dbReference type="EMBL" id="CP000697">
    <property type="protein sequence ID" value="ABQ30330.1"/>
    <property type="molecule type" value="Genomic_DNA"/>
</dbReference>
<dbReference type="RefSeq" id="WP_011942003.1">
    <property type="nucleotide sequence ID" value="NC_009484.1"/>
</dbReference>
<dbReference type="SMR" id="A5FXJ8"/>
<dbReference type="STRING" id="349163.Acry_1118"/>
<dbReference type="KEGG" id="acr:Acry_1118"/>
<dbReference type="eggNOG" id="COG0649">
    <property type="taxonomic scope" value="Bacteria"/>
</dbReference>
<dbReference type="eggNOG" id="COG0852">
    <property type="taxonomic scope" value="Bacteria"/>
</dbReference>
<dbReference type="HOGENOM" id="CLU_015134_3_2_5"/>
<dbReference type="Proteomes" id="UP000000245">
    <property type="component" value="Chromosome"/>
</dbReference>
<dbReference type="GO" id="GO:0030964">
    <property type="term" value="C:NADH dehydrogenase complex"/>
    <property type="evidence" value="ECO:0007669"/>
    <property type="project" value="InterPro"/>
</dbReference>
<dbReference type="GO" id="GO:0005886">
    <property type="term" value="C:plasma membrane"/>
    <property type="evidence" value="ECO:0007669"/>
    <property type="project" value="UniProtKB-SubCell"/>
</dbReference>
<dbReference type="GO" id="GO:0051287">
    <property type="term" value="F:NAD binding"/>
    <property type="evidence" value="ECO:0007669"/>
    <property type="project" value="InterPro"/>
</dbReference>
<dbReference type="GO" id="GO:0008137">
    <property type="term" value="F:NADH dehydrogenase (ubiquinone) activity"/>
    <property type="evidence" value="ECO:0007669"/>
    <property type="project" value="InterPro"/>
</dbReference>
<dbReference type="GO" id="GO:0050136">
    <property type="term" value="F:NADH:ubiquinone reductase (non-electrogenic) activity"/>
    <property type="evidence" value="ECO:0007669"/>
    <property type="project" value="UniProtKB-UniRule"/>
</dbReference>
<dbReference type="GO" id="GO:0048038">
    <property type="term" value="F:quinone binding"/>
    <property type="evidence" value="ECO:0007669"/>
    <property type="project" value="UniProtKB-KW"/>
</dbReference>
<dbReference type="FunFam" id="1.10.645.10:FF:000001">
    <property type="entry name" value="NADH-quinone oxidoreductase subunit C/D"/>
    <property type="match status" value="1"/>
</dbReference>
<dbReference type="Gene3D" id="1.10.645.10">
    <property type="entry name" value="Cytochrome-c3 Hydrogenase, chain B"/>
    <property type="match status" value="1"/>
</dbReference>
<dbReference type="Gene3D" id="3.30.460.80">
    <property type="entry name" value="NADH:ubiquinone oxidoreductase, 30kDa subunit"/>
    <property type="match status" value="1"/>
</dbReference>
<dbReference type="HAMAP" id="MF_01357">
    <property type="entry name" value="NDH1_NuoC"/>
    <property type="match status" value="1"/>
</dbReference>
<dbReference type="HAMAP" id="MF_01359">
    <property type="entry name" value="NDH1_NuoCD_1"/>
    <property type="match status" value="1"/>
</dbReference>
<dbReference type="HAMAP" id="MF_01358">
    <property type="entry name" value="NDH1_NuoD"/>
    <property type="match status" value="1"/>
</dbReference>
<dbReference type="InterPro" id="IPR010218">
    <property type="entry name" value="NADH_DH_suC"/>
</dbReference>
<dbReference type="InterPro" id="IPR023062">
    <property type="entry name" value="NADH_DH_suCD"/>
</dbReference>
<dbReference type="InterPro" id="IPR001135">
    <property type="entry name" value="NADH_Q_OxRdtase_suD"/>
</dbReference>
<dbReference type="InterPro" id="IPR037232">
    <property type="entry name" value="NADH_quin_OxRdtase_su_C/D-like"/>
</dbReference>
<dbReference type="InterPro" id="IPR001268">
    <property type="entry name" value="NADH_UbQ_OxRdtase_30kDa_su"/>
</dbReference>
<dbReference type="InterPro" id="IPR014029">
    <property type="entry name" value="NADH_UbQ_OxRdtase_49kDa_CS"/>
</dbReference>
<dbReference type="InterPro" id="IPR022885">
    <property type="entry name" value="NDH1_su_D/H"/>
</dbReference>
<dbReference type="InterPro" id="IPR029014">
    <property type="entry name" value="NiFe-Hase_large"/>
</dbReference>
<dbReference type="NCBIfam" id="TIGR01961">
    <property type="entry name" value="NuoC_fam"/>
    <property type="match status" value="1"/>
</dbReference>
<dbReference type="NCBIfam" id="TIGR01962">
    <property type="entry name" value="NuoD"/>
    <property type="match status" value="1"/>
</dbReference>
<dbReference type="NCBIfam" id="NF004739">
    <property type="entry name" value="PRK06075.1"/>
    <property type="match status" value="1"/>
</dbReference>
<dbReference type="NCBIfam" id="NF008728">
    <property type="entry name" value="PRK11742.1"/>
    <property type="match status" value="1"/>
</dbReference>
<dbReference type="PANTHER" id="PTHR11993:SF45">
    <property type="entry name" value="NADH-QUINONE OXIDOREDUCTASE SUBUNIT C_D"/>
    <property type="match status" value="1"/>
</dbReference>
<dbReference type="PANTHER" id="PTHR11993">
    <property type="entry name" value="NADH-UBIQUINONE OXIDOREDUCTASE 49 KDA SUBUNIT"/>
    <property type="match status" value="1"/>
</dbReference>
<dbReference type="Pfam" id="PF00329">
    <property type="entry name" value="Complex1_30kDa"/>
    <property type="match status" value="1"/>
</dbReference>
<dbReference type="Pfam" id="PF00346">
    <property type="entry name" value="Complex1_49kDa"/>
    <property type="match status" value="1"/>
</dbReference>
<dbReference type="SUPFAM" id="SSF56762">
    <property type="entry name" value="HydB/Nqo4-like"/>
    <property type="match status" value="1"/>
</dbReference>
<dbReference type="SUPFAM" id="SSF143243">
    <property type="entry name" value="Nqo5-like"/>
    <property type="match status" value="1"/>
</dbReference>
<dbReference type="PROSITE" id="PS00535">
    <property type="entry name" value="COMPLEX1_49K"/>
    <property type="match status" value="1"/>
</dbReference>
<comment type="function">
    <text evidence="1">NDH-1 shuttles electrons from NADH, via FMN and iron-sulfur (Fe-S) centers, to quinones in the respiratory chain. The immediate electron acceptor for the enzyme in this species is believed to be ubiquinone. Couples the redox reaction to proton translocation (for every two electrons transferred, four hydrogen ions are translocated across the cytoplasmic membrane), and thus conserves the redox energy in a proton gradient.</text>
</comment>
<comment type="catalytic activity">
    <reaction evidence="1">
        <text>a quinone + NADH + 5 H(+)(in) = a quinol + NAD(+) + 4 H(+)(out)</text>
        <dbReference type="Rhea" id="RHEA:57888"/>
        <dbReference type="ChEBI" id="CHEBI:15378"/>
        <dbReference type="ChEBI" id="CHEBI:24646"/>
        <dbReference type="ChEBI" id="CHEBI:57540"/>
        <dbReference type="ChEBI" id="CHEBI:57945"/>
        <dbReference type="ChEBI" id="CHEBI:132124"/>
    </reaction>
</comment>
<comment type="subunit">
    <text evidence="1">NDH-1 is composed of 13 different subunits. Subunits NuoB, CD, E, F, and G constitute the peripheral sector of the complex.</text>
</comment>
<comment type="subcellular location">
    <subcellularLocation>
        <location evidence="1">Cell inner membrane</location>
        <topology evidence="1">Peripheral membrane protein</topology>
        <orientation evidence="1">Cytoplasmic side</orientation>
    </subcellularLocation>
</comment>
<comment type="similarity">
    <text evidence="1">In the N-terminal section; belongs to the complex I 30 kDa subunit family.</text>
</comment>
<comment type="similarity">
    <text evidence="1">In the C-terminal section; belongs to the complex I 49 kDa subunit family.</text>
</comment>
<name>NUOCD_ACICJ</name>
<accession>A5FXJ8</accession>
<feature type="chain" id="PRO_0000358605" description="NADH-quinone oxidoreductase subunit C/D">
    <location>
        <begin position="1"/>
        <end position="592"/>
    </location>
</feature>
<feature type="region of interest" description="NADH dehydrogenase I subunit C" evidence="1">
    <location>
        <begin position="1"/>
        <end position="183"/>
    </location>
</feature>
<feature type="region of interest" description="NADH dehydrogenase I subunit D" evidence="1">
    <location>
        <begin position="207"/>
        <end position="592"/>
    </location>
</feature>
<keyword id="KW-0997">Cell inner membrane</keyword>
<keyword id="KW-1003">Cell membrane</keyword>
<keyword id="KW-0472">Membrane</keyword>
<keyword id="KW-0511">Multifunctional enzyme</keyword>
<keyword id="KW-0520">NAD</keyword>
<keyword id="KW-0874">Quinone</keyword>
<keyword id="KW-1185">Reference proteome</keyword>
<keyword id="KW-1278">Translocase</keyword>
<keyword id="KW-0813">Transport</keyword>
<keyword id="KW-0830">Ubiquinone</keyword>
<sequence>MLTEFNSIPATEAEQGIVSDLVRTLGPISFTLQQTADRIPTIWIDRDIVHAVLRHLRDGATRRFQMLYDLTAIDERQRVHRDGLPKSDFTLVYHLVSFERNDDVRVKVPLAEGALEVQSIADIWPNANWYEREVWDMFGIGFAGHPTLFRILTPPTWTGHPLRKDYIARATEMGPYILTEEKERAEQEALRFNPEAWGMKRHSENSDFMFLNLGPNHPSVHGVFRIILQLEGEEIVDAVPEIGFHHRGAEKMAERQSWHTYIPYTDRIDYLGGVMNNFPYVMAVERLAGIEVPSRAQMIRIMLAELFRIASHLVFYGTMSQDVGQLSPVFYMFSDRERVFQIIEAICGFRMHPAWFRIGGVAADLPQGWDRMIRDYLGYQSKRLDEYDKLVMRNRLFKARTIGVGAYTLEEALDWGVTGPGLRACGLGWDYRRQRPYSGYDQLEFDIPICHNGDCYDRVVVHIEEIRQSLRIIRQCLDNMPPGPYKSDHRLTTPPLKERTMQDIETLITHFLNVSWGPVLPPGEAMVSIEATKGINGYYLVADGDTVSYRTRIRTPSFPHLQMIPLISRGAYVADLIAIIGSIDFVMADVDR</sequence>
<proteinExistence type="inferred from homology"/>
<organism>
    <name type="scientific">Acidiphilium cryptum (strain JF-5)</name>
    <dbReference type="NCBI Taxonomy" id="349163"/>
    <lineage>
        <taxon>Bacteria</taxon>
        <taxon>Pseudomonadati</taxon>
        <taxon>Pseudomonadota</taxon>
        <taxon>Alphaproteobacteria</taxon>
        <taxon>Acetobacterales</taxon>
        <taxon>Acidocellaceae</taxon>
        <taxon>Acidiphilium</taxon>
    </lineage>
</organism>
<gene>
    <name evidence="1" type="primary">nuoC</name>
    <name evidence="1" type="synonym">nuoCD</name>
    <name evidence="1" type="synonym">nuoD</name>
    <name type="ordered locus">Acry_1118</name>
</gene>